<feature type="chain" id="PRO_0000128585" description="Large ribosomal subunit protein uL14c">
    <location>
        <begin position="1"/>
        <end position="122"/>
    </location>
</feature>
<reference key="1">
    <citation type="journal article" date="1997" name="Proc. Natl. Acad. Sci. U.S.A.">
        <title>Complete nucleotide sequence of the chloroplast genome from the green alga Chlorella vulgaris: the existence of genes possibly involved in chloroplast division.</title>
        <authorList>
            <person name="Wakasugi T."/>
            <person name="Nagai T."/>
            <person name="Kapoor M."/>
            <person name="Sugita M."/>
            <person name="Ito M."/>
            <person name="Ito S."/>
            <person name="Tsudzuki J."/>
            <person name="Nakashima K."/>
            <person name="Tsudzuki T."/>
            <person name="Suzuki Y."/>
            <person name="Hamada A."/>
            <person name="Ohta T."/>
            <person name="Inamura A."/>
            <person name="Yoshinaga K."/>
            <person name="Sugiura M."/>
        </authorList>
    </citation>
    <scope>NUCLEOTIDE SEQUENCE [LARGE SCALE GENOMIC DNA]</scope>
    <source>
        <strain>IAM C-27 / Tamiya</strain>
    </source>
</reference>
<dbReference type="EMBL" id="AB001684">
    <property type="protein sequence ID" value="BAA58004.1"/>
    <property type="molecule type" value="Genomic_DNA"/>
</dbReference>
<dbReference type="PIR" id="T07356">
    <property type="entry name" value="T07356"/>
</dbReference>
<dbReference type="RefSeq" id="NP_045928.1">
    <property type="nucleotide sequence ID" value="NC_001865.1"/>
</dbReference>
<dbReference type="SMR" id="P56363"/>
<dbReference type="GeneID" id="809199"/>
<dbReference type="OrthoDB" id="274765at2759"/>
<dbReference type="GO" id="GO:0009507">
    <property type="term" value="C:chloroplast"/>
    <property type="evidence" value="ECO:0007669"/>
    <property type="project" value="UniProtKB-SubCell"/>
</dbReference>
<dbReference type="GO" id="GO:0022625">
    <property type="term" value="C:cytosolic large ribosomal subunit"/>
    <property type="evidence" value="ECO:0007669"/>
    <property type="project" value="TreeGrafter"/>
</dbReference>
<dbReference type="GO" id="GO:0070180">
    <property type="term" value="F:large ribosomal subunit rRNA binding"/>
    <property type="evidence" value="ECO:0007669"/>
    <property type="project" value="TreeGrafter"/>
</dbReference>
<dbReference type="GO" id="GO:0003735">
    <property type="term" value="F:structural constituent of ribosome"/>
    <property type="evidence" value="ECO:0007669"/>
    <property type="project" value="InterPro"/>
</dbReference>
<dbReference type="GO" id="GO:0006412">
    <property type="term" value="P:translation"/>
    <property type="evidence" value="ECO:0007669"/>
    <property type="project" value="UniProtKB-UniRule"/>
</dbReference>
<dbReference type="CDD" id="cd00337">
    <property type="entry name" value="Ribosomal_uL14"/>
    <property type="match status" value="1"/>
</dbReference>
<dbReference type="FunFam" id="2.40.150.20:FF:000001">
    <property type="entry name" value="50S ribosomal protein L14"/>
    <property type="match status" value="1"/>
</dbReference>
<dbReference type="Gene3D" id="2.40.150.20">
    <property type="entry name" value="Ribosomal protein L14"/>
    <property type="match status" value="1"/>
</dbReference>
<dbReference type="HAMAP" id="MF_01367">
    <property type="entry name" value="Ribosomal_uL14"/>
    <property type="match status" value="1"/>
</dbReference>
<dbReference type="InterPro" id="IPR000218">
    <property type="entry name" value="Ribosomal_uL14"/>
</dbReference>
<dbReference type="InterPro" id="IPR005745">
    <property type="entry name" value="Ribosomal_uL14_bac-type"/>
</dbReference>
<dbReference type="InterPro" id="IPR019972">
    <property type="entry name" value="Ribosomal_uL14_CS"/>
</dbReference>
<dbReference type="InterPro" id="IPR036853">
    <property type="entry name" value="Ribosomal_uL14_sf"/>
</dbReference>
<dbReference type="NCBIfam" id="TIGR01067">
    <property type="entry name" value="rplN_bact"/>
    <property type="match status" value="1"/>
</dbReference>
<dbReference type="PANTHER" id="PTHR11761">
    <property type="entry name" value="50S/60S RIBOSOMAL PROTEIN L14/L23"/>
    <property type="match status" value="1"/>
</dbReference>
<dbReference type="PANTHER" id="PTHR11761:SF3">
    <property type="entry name" value="LARGE RIBOSOMAL SUBUNIT PROTEIN UL14M"/>
    <property type="match status" value="1"/>
</dbReference>
<dbReference type="Pfam" id="PF00238">
    <property type="entry name" value="Ribosomal_L14"/>
    <property type="match status" value="1"/>
</dbReference>
<dbReference type="SMART" id="SM01374">
    <property type="entry name" value="Ribosomal_L14"/>
    <property type="match status" value="1"/>
</dbReference>
<dbReference type="SUPFAM" id="SSF50193">
    <property type="entry name" value="Ribosomal protein L14"/>
    <property type="match status" value="1"/>
</dbReference>
<dbReference type="PROSITE" id="PS00049">
    <property type="entry name" value="RIBOSOMAL_L14"/>
    <property type="match status" value="1"/>
</dbReference>
<name>RK14_CHLVU</name>
<geneLocation type="chloroplast"/>
<gene>
    <name evidence="1" type="primary">rpl14</name>
</gene>
<organism>
    <name type="scientific">Chlorella vulgaris</name>
    <name type="common">Green alga</name>
    <dbReference type="NCBI Taxonomy" id="3077"/>
    <lineage>
        <taxon>Eukaryota</taxon>
        <taxon>Viridiplantae</taxon>
        <taxon>Chlorophyta</taxon>
        <taxon>core chlorophytes</taxon>
        <taxon>Trebouxiophyceae</taxon>
        <taxon>Chlorellales</taxon>
        <taxon>Chlorellaceae</taxon>
        <taxon>Chlorella clade</taxon>
        <taxon>Chlorella</taxon>
    </lineage>
</organism>
<protein>
    <recommendedName>
        <fullName evidence="1">Large ribosomal subunit protein uL14c</fullName>
    </recommendedName>
    <alternativeName>
        <fullName evidence="2">50S ribosomal protein L14, chloroplastic</fullName>
    </alternativeName>
</protein>
<comment type="function">
    <text evidence="1">Binds to 23S rRNA.</text>
</comment>
<comment type="subunit">
    <text evidence="1">Part of the 50S ribosomal subunit.</text>
</comment>
<comment type="subcellular location">
    <subcellularLocation>
        <location>Plastid</location>
        <location>Chloroplast</location>
    </subcellularLocation>
</comment>
<comment type="similarity">
    <text evidence="1">Belongs to the universal ribosomal protein uL14 family.</text>
</comment>
<sequence length="122" mass="13451">MIQPQTYLRVADNTGARELMCIRVLGGGKQRAATVGDIIIAVVKDATPNMPVKRSDIVRAVIVRTRKNVRRVNGTSIRFDENAAVIINKENNPRGTRVFGPVARELRDGNFTKIISLAPEVL</sequence>
<evidence type="ECO:0000255" key="1">
    <source>
        <dbReference type="HAMAP-Rule" id="MF_01367"/>
    </source>
</evidence>
<evidence type="ECO:0000305" key="2"/>
<keyword id="KW-0150">Chloroplast</keyword>
<keyword id="KW-0934">Plastid</keyword>
<keyword id="KW-0687">Ribonucleoprotein</keyword>
<keyword id="KW-0689">Ribosomal protein</keyword>
<keyword id="KW-0694">RNA-binding</keyword>
<keyword id="KW-0699">rRNA-binding</keyword>
<accession>P56363</accession>
<proteinExistence type="inferred from homology"/>